<feature type="chain" id="PRO_0000197254" description="Metallothionein-4">
    <location>
        <begin position="1"/>
        <end position="62"/>
    </location>
</feature>
<feature type="binding site" evidence="2">
    <location>
        <position position="6"/>
    </location>
    <ligand>
        <name>a divalent metal cation</name>
        <dbReference type="ChEBI" id="CHEBI:60240"/>
        <label>1</label>
        <note>in cluster B</note>
    </ligand>
</feature>
<feature type="binding site" evidence="2">
    <location>
        <position position="8"/>
    </location>
    <ligand>
        <name>a divalent metal cation</name>
        <dbReference type="ChEBI" id="CHEBI:60240"/>
        <label>1</label>
        <note>in cluster B</note>
    </ligand>
</feature>
<feature type="binding site" evidence="2">
    <location>
        <position position="8"/>
    </location>
    <ligand>
        <name>a divalent metal cation</name>
        <dbReference type="ChEBI" id="CHEBI:60240"/>
        <label>2</label>
        <note>in cluster B</note>
    </ligand>
</feature>
<feature type="binding site" evidence="2">
    <location>
        <position position="14"/>
    </location>
    <ligand>
        <name>a divalent metal cation</name>
        <dbReference type="ChEBI" id="CHEBI:60240"/>
        <label>2</label>
        <note>in cluster B</note>
    </ligand>
</feature>
<feature type="binding site" evidence="2">
    <location>
        <position position="16"/>
    </location>
    <ligand>
        <name>a divalent metal cation</name>
        <dbReference type="ChEBI" id="CHEBI:60240"/>
        <label>2</label>
        <note>in cluster B</note>
    </ligand>
</feature>
<feature type="binding site" evidence="2">
    <location>
        <position position="16"/>
    </location>
    <ligand>
        <name>a divalent metal cation</name>
        <dbReference type="ChEBI" id="CHEBI:60240"/>
        <label>3</label>
        <note>in cluster B</note>
    </ligand>
</feature>
<feature type="binding site" evidence="2">
    <location>
        <position position="20"/>
    </location>
    <ligand>
        <name>a divalent metal cation</name>
        <dbReference type="ChEBI" id="CHEBI:60240"/>
        <label>3</label>
        <note>in cluster B</note>
    </ligand>
</feature>
<feature type="binding site" evidence="2">
    <location>
        <position position="22"/>
    </location>
    <ligand>
        <name>a divalent metal cation</name>
        <dbReference type="ChEBI" id="CHEBI:60240"/>
        <label>1</label>
        <note>in cluster B</note>
    </ligand>
</feature>
<feature type="binding site" evidence="2">
    <location>
        <position position="25"/>
    </location>
    <ligand>
        <name>a divalent metal cation</name>
        <dbReference type="ChEBI" id="CHEBI:60240"/>
        <label>1</label>
        <note>in cluster B</note>
    </ligand>
</feature>
<feature type="binding site" evidence="2">
    <location>
        <position position="25"/>
    </location>
    <ligand>
        <name>a divalent metal cation</name>
        <dbReference type="ChEBI" id="CHEBI:60240"/>
        <label>3</label>
        <note>in cluster B</note>
    </ligand>
</feature>
<feature type="binding site" evidence="2">
    <location>
        <position position="27"/>
    </location>
    <ligand>
        <name>a divalent metal cation</name>
        <dbReference type="ChEBI" id="CHEBI:60240"/>
        <label>2</label>
        <note>in cluster B</note>
    </ligand>
</feature>
<feature type="binding site" evidence="2">
    <location>
        <position position="30"/>
    </location>
    <ligand>
        <name>a divalent metal cation</name>
        <dbReference type="ChEBI" id="CHEBI:60240"/>
        <label>3</label>
        <note>in cluster B</note>
    </ligand>
</feature>
<feature type="binding site" evidence="2">
    <location>
        <position position="34"/>
    </location>
    <ligand>
        <name>a divalent metal cation</name>
        <dbReference type="ChEBI" id="CHEBI:60240"/>
        <label>4</label>
        <note>in cluster A</note>
    </ligand>
</feature>
<feature type="binding site" evidence="2">
    <location>
        <position position="35"/>
    </location>
    <ligand>
        <name>a divalent metal cation</name>
        <dbReference type="ChEBI" id="CHEBI:60240"/>
        <label>4</label>
        <note>in cluster A</note>
    </ligand>
</feature>
<feature type="binding site" evidence="2">
    <location>
        <position position="35"/>
    </location>
    <ligand>
        <name>a divalent metal cation</name>
        <dbReference type="ChEBI" id="CHEBI:60240"/>
        <label>5</label>
        <note>in cluster A</note>
    </ligand>
</feature>
<feature type="binding site" evidence="2">
    <location>
        <position position="37"/>
    </location>
    <ligand>
        <name>a divalent metal cation</name>
        <dbReference type="ChEBI" id="CHEBI:60240"/>
        <label>5</label>
        <note>in cluster A</note>
    </ligand>
</feature>
<feature type="binding site" evidence="2">
    <location>
        <position position="38"/>
    </location>
    <ligand>
        <name>a divalent metal cation</name>
        <dbReference type="ChEBI" id="CHEBI:60240"/>
        <label>5</label>
        <note>in cluster A</note>
    </ligand>
</feature>
<feature type="binding site" evidence="2">
    <location>
        <position position="38"/>
    </location>
    <ligand>
        <name>a divalent metal cation</name>
        <dbReference type="ChEBI" id="CHEBI:60240"/>
        <label>6</label>
        <note>in cluster A</note>
    </ligand>
</feature>
<feature type="binding site" evidence="2">
    <location>
        <position position="42"/>
    </location>
    <ligand>
        <name>a divalent metal cation</name>
        <dbReference type="ChEBI" id="CHEBI:60240"/>
        <label>6</label>
        <note>in cluster A</note>
    </ligand>
</feature>
<feature type="binding site" evidence="2">
    <location>
        <position position="45"/>
    </location>
    <ligand>
        <name>a divalent metal cation</name>
        <dbReference type="ChEBI" id="CHEBI:60240"/>
        <label>4</label>
        <note>in cluster A</note>
    </ligand>
</feature>
<feature type="binding site" evidence="2">
    <location>
        <position position="45"/>
    </location>
    <ligand>
        <name>a divalent metal cation</name>
        <dbReference type="ChEBI" id="CHEBI:60240"/>
        <label>6</label>
        <note>in cluster A</note>
    </ligand>
</feature>
<feature type="binding site" evidence="2">
    <location>
        <position position="49"/>
    </location>
    <ligand>
        <name>a divalent metal cation</name>
        <dbReference type="ChEBI" id="CHEBI:60240"/>
        <label>4</label>
        <note>in cluster A</note>
    </ligand>
</feature>
<feature type="binding site" evidence="2">
    <location>
        <position position="51"/>
    </location>
    <ligand>
        <name>a divalent metal cation</name>
        <dbReference type="ChEBI" id="CHEBI:60240"/>
        <label>5</label>
        <note>in cluster A</note>
    </ligand>
</feature>
<feature type="binding site" evidence="2">
    <location>
        <position position="51"/>
    </location>
    <ligand>
        <name>a divalent metal cation</name>
        <dbReference type="ChEBI" id="CHEBI:60240"/>
        <label>7</label>
        <note>in cluster A</note>
    </ligand>
</feature>
<feature type="binding site" evidence="2">
    <location>
        <position position="58"/>
    </location>
    <ligand>
        <name>a divalent metal cation</name>
        <dbReference type="ChEBI" id="CHEBI:60240"/>
        <label>7</label>
        <note>in cluster A</note>
    </ligand>
</feature>
<feature type="binding site" evidence="2">
    <location>
        <position position="60"/>
    </location>
    <ligand>
        <name>a divalent metal cation</name>
        <dbReference type="ChEBI" id="CHEBI:60240"/>
        <label>7</label>
        <note>in cluster A</note>
    </ligand>
</feature>
<feature type="binding site" evidence="2">
    <location>
        <position position="61"/>
    </location>
    <ligand>
        <name>a divalent metal cation</name>
        <dbReference type="ChEBI" id="CHEBI:60240"/>
        <label>6</label>
        <note>in cluster A</note>
    </ligand>
</feature>
<feature type="binding site" evidence="2">
    <location>
        <position position="61"/>
    </location>
    <ligand>
        <name>a divalent metal cation</name>
        <dbReference type="ChEBI" id="CHEBI:60240"/>
        <label>7</label>
        <note>in cluster A</note>
    </ligand>
</feature>
<name>MT4_CANLF</name>
<organism>
    <name type="scientific">Canis lupus familiaris</name>
    <name type="common">Dog</name>
    <name type="synonym">Canis familiaris</name>
    <dbReference type="NCBI Taxonomy" id="9615"/>
    <lineage>
        <taxon>Eukaryota</taxon>
        <taxon>Metazoa</taxon>
        <taxon>Chordata</taxon>
        <taxon>Craniata</taxon>
        <taxon>Vertebrata</taxon>
        <taxon>Euteleostomi</taxon>
        <taxon>Mammalia</taxon>
        <taxon>Eutheria</taxon>
        <taxon>Laurasiatheria</taxon>
        <taxon>Carnivora</taxon>
        <taxon>Caniformia</taxon>
        <taxon>Canidae</taxon>
        <taxon>Canis</taxon>
    </lineage>
</organism>
<sequence length="62" mass="6249">MDPGECTCMSGGICICGDNCKCTTCNCKTCRKSCCPCCPPGCAKCAQGCICKGGSDKCSCCA</sequence>
<gene>
    <name type="primary">MT4</name>
</gene>
<proteinExistence type="inferred from homology"/>
<keyword id="KW-0186">Copper</keyword>
<keyword id="KW-0479">Metal-binding</keyword>
<keyword id="KW-0480">Metal-thiolate cluster</keyword>
<keyword id="KW-1185">Reference proteome</keyword>
<keyword id="KW-0862">Zinc</keyword>
<accession>Q9TUI5</accession>
<comment type="function">
    <text evidence="1">Seems to bind zinc and copper. Could play a special role in regulating zinc metabolism during the differentiation of stratified epithelia (By similarity).</text>
</comment>
<comment type="similarity">
    <text evidence="3">Belongs to the metallothionein superfamily. Type 1 family.</text>
</comment>
<dbReference type="EMBL" id="AB028041">
    <property type="protein sequence ID" value="BAA87326.1"/>
    <property type="molecule type" value="mRNA"/>
</dbReference>
<dbReference type="RefSeq" id="NP_001003150.1">
    <property type="nucleotide sequence ID" value="NM_001003150.1"/>
</dbReference>
<dbReference type="RefSeq" id="XP_038513643.1">
    <property type="nucleotide sequence ID" value="XM_038657715.1"/>
</dbReference>
<dbReference type="SMR" id="Q9TUI5"/>
<dbReference type="STRING" id="9615.ENSCAFP00000013416"/>
<dbReference type="PaxDb" id="9612-ENSCAFP00000013416"/>
<dbReference type="Ensembl" id="ENSCAFT00000014504.2">
    <property type="protein sequence ID" value="ENSCAFP00000013416.1"/>
    <property type="gene ID" value="ENSCAFG00000009118.2"/>
</dbReference>
<dbReference type="Ensembl" id="ENSCAFT00030007915.1">
    <property type="protein sequence ID" value="ENSCAFP00030006943.1"/>
    <property type="gene ID" value="ENSCAFG00030004291.1"/>
</dbReference>
<dbReference type="Ensembl" id="ENSCAFT00040025722.1">
    <property type="protein sequence ID" value="ENSCAFP00040022369.1"/>
    <property type="gene ID" value="ENSCAFG00040013937.1"/>
</dbReference>
<dbReference type="Ensembl" id="ENSCAFT00845006961.1">
    <property type="protein sequence ID" value="ENSCAFP00845005550.1"/>
    <property type="gene ID" value="ENSCAFG00845003871.1"/>
</dbReference>
<dbReference type="GeneID" id="403769"/>
<dbReference type="KEGG" id="cfa:403769"/>
<dbReference type="CTD" id="84560"/>
<dbReference type="VEuPathDB" id="HostDB:ENSCAFG00845003871"/>
<dbReference type="VGNC" id="VGNC:52145">
    <property type="gene designation" value="MT4"/>
</dbReference>
<dbReference type="eggNOG" id="KOG4738">
    <property type="taxonomic scope" value="Eukaryota"/>
</dbReference>
<dbReference type="GeneTree" id="ENSGT00950000182967"/>
<dbReference type="HOGENOM" id="CLU_171204_2_0_1"/>
<dbReference type="InParanoid" id="Q9TUI5"/>
<dbReference type="OMA" id="DKCGCCP"/>
<dbReference type="TreeFam" id="TF336054"/>
<dbReference type="Proteomes" id="UP000002254">
    <property type="component" value="Chromosome 2"/>
</dbReference>
<dbReference type="Proteomes" id="UP000694429">
    <property type="component" value="Chromosome 2"/>
</dbReference>
<dbReference type="Proteomes" id="UP000694542">
    <property type="component" value="Chromosome 2"/>
</dbReference>
<dbReference type="Proteomes" id="UP000805418">
    <property type="component" value="Chromosome 2"/>
</dbReference>
<dbReference type="Bgee" id="ENSCAFG00000009118">
    <property type="expression patterns" value="Expressed in nose and 11 other cell types or tissues"/>
</dbReference>
<dbReference type="GO" id="GO:0005737">
    <property type="term" value="C:cytoplasm"/>
    <property type="evidence" value="ECO:0000318"/>
    <property type="project" value="GO_Central"/>
</dbReference>
<dbReference type="GO" id="GO:0005634">
    <property type="term" value="C:nucleus"/>
    <property type="evidence" value="ECO:0000318"/>
    <property type="project" value="GO_Central"/>
</dbReference>
<dbReference type="GO" id="GO:0046872">
    <property type="term" value="F:metal ion binding"/>
    <property type="evidence" value="ECO:0000318"/>
    <property type="project" value="GO_Central"/>
</dbReference>
<dbReference type="GO" id="GO:0071276">
    <property type="term" value="P:cellular response to cadmium ion"/>
    <property type="evidence" value="ECO:0000318"/>
    <property type="project" value="GO_Central"/>
</dbReference>
<dbReference type="GO" id="GO:0071280">
    <property type="term" value="P:cellular response to copper ion"/>
    <property type="evidence" value="ECO:0000318"/>
    <property type="project" value="GO_Central"/>
</dbReference>
<dbReference type="GO" id="GO:0071294">
    <property type="term" value="P:cellular response to zinc ion"/>
    <property type="evidence" value="ECO:0000318"/>
    <property type="project" value="GO_Central"/>
</dbReference>
<dbReference type="GO" id="GO:0010273">
    <property type="term" value="P:detoxification of copper ion"/>
    <property type="evidence" value="ECO:0000318"/>
    <property type="project" value="GO_Central"/>
</dbReference>
<dbReference type="GO" id="GO:0006882">
    <property type="term" value="P:intracellular zinc ion homeostasis"/>
    <property type="evidence" value="ECO:0000318"/>
    <property type="project" value="GO_Central"/>
</dbReference>
<dbReference type="FunFam" id="4.10.10.10:FF:000001">
    <property type="entry name" value="Metallothionein"/>
    <property type="match status" value="1"/>
</dbReference>
<dbReference type="Gene3D" id="4.10.10.10">
    <property type="entry name" value="Metallothionein Isoform II"/>
    <property type="match status" value="1"/>
</dbReference>
<dbReference type="InterPro" id="IPR017854">
    <property type="entry name" value="Metalthion_dom_sf"/>
</dbReference>
<dbReference type="InterPro" id="IPR023587">
    <property type="entry name" value="Metalthion_dom_sf_vert"/>
</dbReference>
<dbReference type="InterPro" id="IPR000006">
    <property type="entry name" value="Metalthion_vert"/>
</dbReference>
<dbReference type="InterPro" id="IPR018064">
    <property type="entry name" value="Metalthion_vert_metal_BS"/>
</dbReference>
<dbReference type="PANTHER" id="PTHR23299">
    <property type="entry name" value="METALLOTHIONEIN"/>
    <property type="match status" value="1"/>
</dbReference>
<dbReference type="PANTHER" id="PTHR23299:SF12">
    <property type="entry name" value="METALLOTHIONEIN-4"/>
    <property type="match status" value="1"/>
</dbReference>
<dbReference type="Pfam" id="PF00131">
    <property type="entry name" value="Metallothio"/>
    <property type="match status" value="1"/>
</dbReference>
<dbReference type="PRINTS" id="PR00860">
    <property type="entry name" value="MTVERTEBRATE"/>
</dbReference>
<dbReference type="SUPFAM" id="SSF57868">
    <property type="entry name" value="Metallothionein"/>
    <property type="match status" value="1"/>
</dbReference>
<dbReference type="PROSITE" id="PS00203">
    <property type="entry name" value="METALLOTHIONEIN_VRT"/>
    <property type="match status" value="1"/>
</dbReference>
<reference key="1">
    <citation type="submission" date="1999-05" db="EMBL/GenBank/DDBJ databases">
        <title>Molecular cloning and expression of metallothionein-IV.</title>
        <authorList>
            <person name="Kobayashi K."/>
            <person name="Morita T."/>
            <person name="Shimada A."/>
        </authorList>
    </citation>
    <scope>NUCLEOTIDE SEQUENCE [MRNA]</scope>
    <source>
        <strain>Beagle</strain>
        <tissue>Tongue</tissue>
    </source>
</reference>
<evidence type="ECO:0000250" key="1"/>
<evidence type="ECO:0000250" key="2">
    <source>
        <dbReference type="UniProtKB" id="P02795"/>
    </source>
</evidence>
<evidence type="ECO:0000305" key="3"/>
<protein>
    <recommendedName>
        <fullName>Metallothionein-4</fullName>
        <shortName>MT-4</shortName>
    </recommendedName>
    <alternativeName>
        <fullName>Metallothionein-IV</fullName>
        <shortName>MT-IV</shortName>
    </alternativeName>
</protein>